<name>F9_ORFN7</name>
<comment type="subcellular location">
    <subcellularLocation>
        <location evidence="3">Virion membrane</location>
        <topology evidence="3">Single-pass membrane protein</topology>
    </subcellularLocation>
    <text evidence="1">Component of the mature virion (MV) membrane. The mature virion is located in the cytoplasm of infected cells and is probably released by cell lysis (By similarity).</text>
</comment>
<comment type="similarity">
    <text evidence="3">Belongs to the chordopoxvirinae L1 protein family.</text>
</comment>
<organismHost>
    <name type="scientific">Capra hircus</name>
    <name type="common">Goat</name>
    <dbReference type="NCBI Taxonomy" id="9925"/>
</organismHost>
<organismHost>
    <name type="scientific">Homo sapiens</name>
    <name type="common">Human</name>
    <dbReference type="NCBI Taxonomy" id="9606"/>
</organismHost>
<organismHost>
    <name type="scientific">Ovis aries</name>
    <name type="common">Sheep</name>
    <dbReference type="NCBI Taxonomy" id="9940"/>
</organismHost>
<feature type="chain" id="PRO_0000099496" description="Protein F9 homolog">
    <location>
        <begin position="1" status="less than"/>
        <end position="74"/>
    </location>
</feature>
<feature type="topological domain" description="Virion surface" evidence="2">
    <location>
        <begin position="1"/>
        <end position="34"/>
    </location>
</feature>
<feature type="transmembrane region" description="Helical" evidence="2">
    <location>
        <begin position="35"/>
        <end position="55"/>
    </location>
</feature>
<feature type="topological domain" description="Intravirion" evidence="2">
    <location>
        <begin position="56"/>
        <end position="73"/>
    </location>
</feature>
<feature type="non-terminal residue">
    <location>
        <position position="1"/>
    </location>
</feature>
<evidence type="ECO:0000250" key="1"/>
<evidence type="ECO:0000255" key="2"/>
<evidence type="ECO:0000305" key="3"/>
<proteinExistence type="inferred from homology"/>
<reference key="1">
    <citation type="journal article" date="1994" name="J. Virol.">
        <title>Homologs of vascular endothelial growth factor are encoded by the poxvirus orf virus.</title>
        <authorList>
            <person name="Lyttle D.J."/>
            <person name="Fraser K.M."/>
            <person name="Fleming S.B."/>
            <person name="Mercer A.A."/>
            <person name="Robinson A.J."/>
        </authorList>
    </citation>
    <scope>NUCLEOTIDE SEQUENCE [GENOMIC DNA]</scope>
</reference>
<dbReference type="EMBL" id="S67522">
    <property type="protein sequence ID" value="AAB29222.1"/>
    <property type="molecule type" value="Genomic_DNA"/>
</dbReference>
<dbReference type="PIR" id="C49530">
    <property type="entry name" value="C49530"/>
</dbReference>
<dbReference type="GO" id="GO:0016020">
    <property type="term" value="C:membrane"/>
    <property type="evidence" value="ECO:0007669"/>
    <property type="project" value="UniProtKB-KW"/>
</dbReference>
<dbReference type="GO" id="GO:0019031">
    <property type="term" value="C:viral envelope"/>
    <property type="evidence" value="ECO:0007669"/>
    <property type="project" value="UniProtKB-KW"/>
</dbReference>
<dbReference type="GO" id="GO:0055036">
    <property type="term" value="C:virion membrane"/>
    <property type="evidence" value="ECO:0007669"/>
    <property type="project" value="UniProtKB-SubCell"/>
</dbReference>
<sequence>GHAAANCALARVATALTRRVPASRHGLAEGGTPPWTLLLAVAAVAVLGVVAISLLRRALRIRFRYSKSIQTLRV</sequence>
<organism>
    <name type="scientific">Orf virus (strain NZ7)</name>
    <name type="common">OV NZ-7</name>
    <dbReference type="NCBI Taxonomy" id="73495"/>
    <lineage>
        <taxon>Viruses</taxon>
        <taxon>Varidnaviria</taxon>
        <taxon>Bamfordvirae</taxon>
        <taxon>Nucleocytoviricota</taxon>
        <taxon>Pokkesviricetes</taxon>
        <taxon>Chitovirales</taxon>
        <taxon>Poxviridae</taxon>
        <taxon>Chordopoxvirinae</taxon>
        <taxon>Parapoxvirus</taxon>
        <taxon>Orf virus</taxon>
    </lineage>
</organism>
<accession>P52587</accession>
<keyword id="KW-0472">Membrane</keyword>
<keyword id="KW-0812">Transmembrane</keyword>
<keyword id="KW-1133">Transmembrane helix</keyword>
<keyword id="KW-0261">Viral envelope protein</keyword>
<keyword id="KW-0946">Virion</keyword>
<gene>
    <name type="ORF">A3R</name>
</gene>
<protein>
    <recommendedName>
        <fullName>Protein F9 homolog</fullName>
    </recommendedName>
</protein>